<feature type="chain" id="PRO_1000019563" description="ATP-dependent dethiobiotin synthetase BioD">
    <location>
        <begin position="1"/>
        <end position="212"/>
    </location>
</feature>
<feature type="active site" evidence="1">
    <location>
        <position position="36"/>
    </location>
</feature>
<feature type="binding site" evidence="1">
    <location>
        <begin position="10"/>
        <end position="15"/>
    </location>
    <ligand>
        <name>ATP</name>
        <dbReference type="ChEBI" id="CHEBI:30616"/>
    </ligand>
</feature>
<feature type="binding site" evidence="1">
    <location>
        <position position="14"/>
    </location>
    <ligand>
        <name>Mg(2+)</name>
        <dbReference type="ChEBI" id="CHEBI:18420"/>
    </ligand>
</feature>
<feature type="binding site" evidence="1">
    <location>
        <position position="40"/>
    </location>
    <ligand>
        <name>substrate</name>
    </ligand>
</feature>
<feature type="binding site" evidence="1">
    <location>
        <position position="45"/>
    </location>
    <ligand>
        <name>ATP</name>
        <dbReference type="ChEBI" id="CHEBI:30616"/>
    </ligand>
</feature>
<feature type="binding site" evidence="1">
    <location>
        <position position="45"/>
    </location>
    <ligand>
        <name>Mg(2+)</name>
        <dbReference type="ChEBI" id="CHEBI:18420"/>
    </ligand>
</feature>
<feature type="binding site" evidence="1">
    <location>
        <begin position="106"/>
        <end position="109"/>
    </location>
    <ligand>
        <name>ATP</name>
        <dbReference type="ChEBI" id="CHEBI:30616"/>
    </ligand>
</feature>
<feature type="binding site" evidence="1">
    <location>
        <position position="106"/>
    </location>
    <ligand>
        <name>Mg(2+)</name>
        <dbReference type="ChEBI" id="CHEBI:18420"/>
    </ligand>
</feature>
<feature type="binding site" evidence="1">
    <location>
        <begin position="167"/>
        <end position="168"/>
    </location>
    <ligand>
        <name>ATP</name>
        <dbReference type="ChEBI" id="CHEBI:30616"/>
    </ligand>
</feature>
<proteinExistence type="inferred from homology"/>
<accession>A6UVE3</accession>
<comment type="function">
    <text evidence="1">Catalyzes a mechanistically unusual reaction, the ATP-dependent insertion of CO2 between the N7 and N8 nitrogen atoms of 7,8-diaminopelargonic acid (DAPA, also called 7,8-diammoniononanoate) to form a ureido ring.</text>
</comment>
<comment type="catalytic activity">
    <reaction evidence="1">
        <text>(7R,8S)-7,8-diammoniononanoate + CO2 + ATP = (4R,5S)-dethiobiotin + ADP + phosphate + 3 H(+)</text>
        <dbReference type="Rhea" id="RHEA:15805"/>
        <dbReference type="ChEBI" id="CHEBI:15378"/>
        <dbReference type="ChEBI" id="CHEBI:16526"/>
        <dbReference type="ChEBI" id="CHEBI:30616"/>
        <dbReference type="ChEBI" id="CHEBI:43474"/>
        <dbReference type="ChEBI" id="CHEBI:149469"/>
        <dbReference type="ChEBI" id="CHEBI:149473"/>
        <dbReference type="ChEBI" id="CHEBI:456216"/>
        <dbReference type="EC" id="6.3.3.3"/>
    </reaction>
</comment>
<comment type="cofactor">
    <cofactor evidence="1">
        <name>Mg(2+)</name>
        <dbReference type="ChEBI" id="CHEBI:18420"/>
    </cofactor>
</comment>
<comment type="pathway">
    <text evidence="1">Cofactor biosynthesis; biotin biosynthesis; biotin from 7,8-diaminononanoate: step 1/2.</text>
</comment>
<comment type="subunit">
    <text evidence="1">Homodimer.</text>
</comment>
<comment type="subcellular location">
    <subcellularLocation>
        <location evidence="1">Cytoplasm</location>
    </subcellularLocation>
</comment>
<comment type="similarity">
    <text evidence="1">Belongs to the dethiobiotin synthetase family.</text>
</comment>
<keyword id="KW-0067">ATP-binding</keyword>
<keyword id="KW-0093">Biotin biosynthesis</keyword>
<keyword id="KW-0963">Cytoplasm</keyword>
<keyword id="KW-0436">Ligase</keyword>
<keyword id="KW-0460">Magnesium</keyword>
<keyword id="KW-0479">Metal-binding</keyword>
<keyword id="KW-0547">Nucleotide-binding</keyword>
<sequence>MIFITGTDTGVGKTFVSKIIGKHLKYKENINTGYLKPIESGGIEDTATLKEALNLDENLNILNPVNLKNPLSPNIAAEIENKPIDLVEIKKSFDLLKNKYDFLIIEGAGGVAVPIKYNSFLMSDLIVYLGAPAIIVSRPDLGTINHTLLTIEHLRNKGILVKGVIINCINELDTVLHYEKTFETINRCGNVEIIGIVKNENEYNINFDKIIG</sequence>
<evidence type="ECO:0000255" key="1">
    <source>
        <dbReference type="HAMAP-Rule" id="MF_00336"/>
    </source>
</evidence>
<organism>
    <name type="scientific">Methanococcus aeolicus (strain ATCC BAA-1280 / DSM 17508 / OCM 812 / Nankai-3)</name>
    <dbReference type="NCBI Taxonomy" id="419665"/>
    <lineage>
        <taxon>Archaea</taxon>
        <taxon>Methanobacteriati</taxon>
        <taxon>Methanobacteriota</taxon>
        <taxon>Methanomada group</taxon>
        <taxon>Methanococci</taxon>
        <taxon>Methanococcales</taxon>
        <taxon>Methanococcaceae</taxon>
        <taxon>Methanococcus</taxon>
    </lineage>
</organism>
<reference key="1">
    <citation type="submission" date="2007-06" db="EMBL/GenBank/DDBJ databases">
        <title>Complete sequence of Methanococcus aeolicus Nankai-3.</title>
        <authorList>
            <consortium name="US DOE Joint Genome Institute"/>
            <person name="Copeland A."/>
            <person name="Lucas S."/>
            <person name="Lapidus A."/>
            <person name="Barry K."/>
            <person name="Glavina del Rio T."/>
            <person name="Dalin E."/>
            <person name="Tice H."/>
            <person name="Pitluck S."/>
            <person name="Chain P."/>
            <person name="Malfatti S."/>
            <person name="Shin M."/>
            <person name="Vergez L."/>
            <person name="Schmutz J."/>
            <person name="Larimer F."/>
            <person name="Land M."/>
            <person name="Hauser L."/>
            <person name="Kyrpides N."/>
            <person name="Lykidis A."/>
            <person name="Sieprawska-Lupa M."/>
            <person name="Whitman W.B."/>
            <person name="Richardson P."/>
        </authorList>
    </citation>
    <scope>NUCLEOTIDE SEQUENCE [LARGE SCALE GENOMIC DNA]</scope>
    <source>
        <strain>ATCC BAA-1280 / DSM 17508 / OCM 812 / Nankai-3</strain>
    </source>
</reference>
<name>BIOD_META3</name>
<dbReference type="EC" id="6.3.3.3" evidence="1"/>
<dbReference type="EMBL" id="CP000743">
    <property type="protein sequence ID" value="ABR56465.1"/>
    <property type="molecule type" value="Genomic_DNA"/>
</dbReference>
<dbReference type="RefSeq" id="WP_011973597.1">
    <property type="nucleotide sequence ID" value="NC_009635.1"/>
</dbReference>
<dbReference type="SMR" id="A6UVE3"/>
<dbReference type="STRING" id="419665.Maeo_0883"/>
<dbReference type="GeneID" id="5326991"/>
<dbReference type="KEGG" id="mae:Maeo_0883"/>
<dbReference type="eggNOG" id="arCOG00100">
    <property type="taxonomic scope" value="Archaea"/>
</dbReference>
<dbReference type="HOGENOM" id="CLU_072551_3_1_2"/>
<dbReference type="OrthoDB" id="50320at2157"/>
<dbReference type="UniPathway" id="UPA00078">
    <property type="reaction ID" value="UER00161"/>
</dbReference>
<dbReference type="Proteomes" id="UP000001106">
    <property type="component" value="Chromosome"/>
</dbReference>
<dbReference type="GO" id="GO:0005829">
    <property type="term" value="C:cytosol"/>
    <property type="evidence" value="ECO:0007669"/>
    <property type="project" value="TreeGrafter"/>
</dbReference>
<dbReference type="GO" id="GO:0005524">
    <property type="term" value="F:ATP binding"/>
    <property type="evidence" value="ECO:0007669"/>
    <property type="project" value="UniProtKB-UniRule"/>
</dbReference>
<dbReference type="GO" id="GO:0004141">
    <property type="term" value="F:dethiobiotin synthase activity"/>
    <property type="evidence" value="ECO:0007669"/>
    <property type="project" value="UniProtKB-UniRule"/>
</dbReference>
<dbReference type="GO" id="GO:0000287">
    <property type="term" value="F:magnesium ion binding"/>
    <property type="evidence" value="ECO:0007669"/>
    <property type="project" value="UniProtKB-UniRule"/>
</dbReference>
<dbReference type="GO" id="GO:0009102">
    <property type="term" value="P:biotin biosynthetic process"/>
    <property type="evidence" value="ECO:0007669"/>
    <property type="project" value="UniProtKB-UniRule"/>
</dbReference>
<dbReference type="CDD" id="cd03109">
    <property type="entry name" value="DTBS"/>
    <property type="match status" value="1"/>
</dbReference>
<dbReference type="Gene3D" id="3.40.50.300">
    <property type="entry name" value="P-loop containing nucleotide triphosphate hydrolases"/>
    <property type="match status" value="1"/>
</dbReference>
<dbReference type="HAMAP" id="MF_00336">
    <property type="entry name" value="BioD"/>
    <property type="match status" value="1"/>
</dbReference>
<dbReference type="InterPro" id="IPR004472">
    <property type="entry name" value="DTB_synth_BioD"/>
</dbReference>
<dbReference type="InterPro" id="IPR027417">
    <property type="entry name" value="P-loop_NTPase"/>
</dbReference>
<dbReference type="NCBIfam" id="TIGR00347">
    <property type="entry name" value="bioD"/>
    <property type="match status" value="1"/>
</dbReference>
<dbReference type="PANTHER" id="PTHR43210">
    <property type="entry name" value="DETHIOBIOTIN SYNTHETASE"/>
    <property type="match status" value="1"/>
</dbReference>
<dbReference type="PANTHER" id="PTHR43210:SF5">
    <property type="entry name" value="DETHIOBIOTIN SYNTHETASE"/>
    <property type="match status" value="1"/>
</dbReference>
<dbReference type="Pfam" id="PF13500">
    <property type="entry name" value="AAA_26"/>
    <property type="match status" value="1"/>
</dbReference>
<dbReference type="PIRSF" id="PIRSF006755">
    <property type="entry name" value="DTB_synth"/>
    <property type="match status" value="1"/>
</dbReference>
<dbReference type="SUPFAM" id="SSF52540">
    <property type="entry name" value="P-loop containing nucleoside triphosphate hydrolases"/>
    <property type="match status" value="1"/>
</dbReference>
<protein>
    <recommendedName>
        <fullName evidence="1">ATP-dependent dethiobiotin synthetase BioD</fullName>
        <ecNumber evidence="1">6.3.3.3</ecNumber>
    </recommendedName>
    <alternativeName>
        <fullName evidence="1">DTB synthetase</fullName>
        <shortName evidence="1">DTBS</shortName>
    </alternativeName>
    <alternativeName>
        <fullName evidence="1">Dethiobiotin synthase</fullName>
    </alternativeName>
</protein>
<gene>
    <name evidence="1" type="primary">bioD</name>
    <name type="ordered locus">Maeo_0883</name>
</gene>